<name>RXL7_STAA1</name>
<accession>A7WYX0</accession>
<dbReference type="EMBL" id="AP009324">
    <property type="protein sequence ID" value="BAF77425.1"/>
    <property type="molecule type" value="Genomic_DNA"/>
</dbReference>
<dbReference type="RefSeq" id="WP_000031892.1">
    <property type="nucleotide sequence ID" value="NZ_CTYB01000013.1"/>
</dbReference>
<dbReference type="SMR" id="A7WYX0"/>
<dbReference type="KEGG" id="saw:SAHV_0542"/>
<dbReference type="HOGENOM" id="CLU_168063_0_0_9"/>
<dbReference type="GO" id="GO:0003723">
    <property type="term" value="F:RNA binding"/>
    <property type="evidence" value="ECO:0007669"/>
    <property type="project" value="UniProtKB-UniRule"/>
</dbReference>
<dbReference type="Gene3D" id="3.30.1330.30">
    <property type="match status" value="1"/>
</dbReference>
<dbReference type="HAMAP" id="MF_00574">
    <property type="entry name" value="Ribosomal_eL8_Bact"/>
    <property type="match status" value="1"/>
</dbReference>
<dbReference type="InterPro" id="IPR029064">
    <property type="entry name" value="Ribosomal_eL30-like_sf"/>
</dbReference>
<dbReference type="InterPro" id="IPR004038">
    <property type="entry name" value="Ribosomal_eL8/eL30/eS12/Gad45"/>
</dbReference>
<dbReference type="InterPro" id="IPR023460">
    <property type="entry name" value="RNA_bf_YbxF-like"/>
</dbReference>
<dbReference type="NCBIfam" id="NF010123">
    <property type="entry name" value="PRK13600.1"/>
    <property type="match status" value="1"/>
</dbReference>
<dbReference type="Pfam" id="PF01248">
    <property type="entry name" value="Ribosomal_L7Ae"/>
    <property type="match status" value="1"/>
</dbReference>
<dbReference type="SUPFAM" id="SSF55315">
    <property type="entry name" value="L30e-like"/>
    <property type="match status" value="1"/>
</dbReference>
<gene>
    <name type="ordered locus">SAHV_0542</name>
</gene>
<evidence type="ECO:0000255" key="1">
    <source>
        <dbReference type="HAMAP-Rule" id="MF_00574"/>
    </source>
</evidence>
<evidence type="ECO:0000305" key="2"/>
<feature type="chain" id="PRO_1000025043" description="RNA-binding protein SAHV_0542">
    <location>
        <begin position="1"/>
        <end position="84"/>
    </location>
</feature>
<reference key="1">
    <citation type="journal article" date="2008" name="Antimicrob. Agents Chemother.">
        <title>Mutated response regulator graR is responsible for phenotypic conversion of Staphylococcus aureus from heterogeneous vancomycin-intermediate resistance to vancomycin-intermediate resistance.</title>
        <authorList>
            <person name="Neoh H.-M."/>
            <person name="Cui L."/>
            <person name="Yuzawa H."/>
            <person name="Takeuchi F."/>
            <person name="Matsuo M."/>
            <person name="Hiramatsu K."/>
        </authorList>
    </citation>
    <scope>NUCLEOTIDE SEQUENCE [LARGE SCALE GENOMIC DNA]</scope>
    <source>
        <strain>Mu3 / ATCC 700698</strain>
    </source>
</reference>
<protein>
    <recommendedName>
        <fullName evidence="1">RNA-binding protein SAHV_0542</fullName>
    </recommendedName>
    <alternativeName>
        <fullName evidence="2">Putative ribosomal protein L7Ae-like</fullName>
    </alternativeName>
    <alternativeName>
        <fullName evidence="1">Ribosomal protein eL8-like</fullName>
    </alternativeName>
</protein>
<organism>
    <name type="scientific">Staphylococcus aureus (strain Mu3 / ATCC 700698)</name>
    <dbReference type="NCBI Taxonomy" id="418127"/>
    <lineage>
        <taxon>Bacteria</taxon>
        <taxon>Bacillati</taxon>
        <taxon>Bacillota</taxon>
        <taxon>Bacilli</taxon>
        <taxon>Bacillales</taxon>
        <taxon>Staphylococcaceae</taxon>
        <taxon>Staphylococcus</taxon>
    </lineage>
</organism>
<sequence length="84" mass="9446">MSKEKVARFNKQHFVVGLKETLKALKKDQVTSLIIAEDVEVYLMTRVLSQINQKNIPVSFFKSKHALGKHVGINVNATIVALIK</sequence>
<keyword id="KW-0694">RNA-binding</keyword>
<comment type="similarity">
    <text evidence="1">Belongs to the eukaryotic ribosomal protein eL8 family.</text>
</comment>
<proteinExistence type="inferred from homology"/>